<organism>
    <name type="scientific">Homo sapiens</name>
    <name type="common">Human</name>
    <dbReference type="NCBI Taxonomy" id="9606"/>
    <lineage>
        <taxon>Eukaryota</taxon>
        <taxon>Metazoa</taxon>
        <taxon>Chordata</taxon>
        <taxon>Craniata</taxon>
        <taxon>Vertebrata</taxon>
        <taxon>Euteleostomi</taxon>
        <taxon>Mammalia</taxon>
        <taxon>Eutheria</taxon>
        <taxon>Euarchontoglires</taxon>
        <taxon>Primates</taxon>
        <taxon>Haplorrhini</taxon>
        <taxon>Catarrhini</taxon>
        <taxon>Hominidae</taxon>
        <taxon>Homo</taxon>
    </lineage>
</organism>
<gene>
    <name type="primary">TGFB3</name>
</gene>
<accession>P10600</accession>
<accession>Q8WV88</accession>
<evidence type="ECO:0000250" key="1">
    <source>
        <dbReference type="UniProtKB" id="P01137"/>
    </source>
</evidence>
<evidence type="ECO:0000250" key="2">
    <source>
        <dbReference type="UniProtKB" id="P04202"/>
    </source>
</evidence>
<evidence type="ECO:0000250" key="3">
    <source>
        <dbReference type="UniProtKB" id="P17125"/>
    </source>
</evidence>
<evidence type="ECO:0000255" key="4"/>
<evidence type="ECO:0000269" key="5">
    <source>
    </source>
</evidence>
<evidence type="ECO:0000269" key="6">
    <source>
    </source>
</evidence>
<evidence type="ECO:0000269" key="7">
    <source>
    </source>
</evidence>
<evidence type="ECO:0000269" key="8">
    <source>
    </source>
</evidence>
<evidence type="ECO:0000269" key="9">
    <source ref="5"/>
</evidence>
<evidence type="ECO:0000303" key="10">
    <source>
    </source>
</evidence>
<evidence type="ECO:0000303" key="11">
    <source ref="6"/>
</evidence>
<evidence type="ECO:0000305" key="12"/>
<evidence type="ECO:0007829" key="13">
    <source>
        <dbReference type="PDB" id="1TGJ"/>
    </source>
</evidence>
<evidence type="ECO:0007829" key="14">
    <source>
        <dbReference type="PDB" id="4UM9"/>
    </source>
</evidence>
<evidence type="ECO:0007829" key="15">
    <source>
        <dbReference type="PDB" id="8V52"/>
    </source>
</evidence>
<evidence type="ECO:0007829" key="16">
    <source>
        <dbReference type="PDB" id="8VSB"/>
    </source>
</evidence>
<sequence length="412" mass="47328">MKMHLQRALVVLALLNFATVSLSLSTCTTLDFGHIKKKRVEAIRGQILSKLRLTSPPEPTVMTHVPYQVLALYNSTRELLEEMHGEREEGCTQENTESEYYAKEIHKFDMIQGLAEHNELAVCPKGITSKVFRFNVSSVEKNRTNLFRAEFRVLRVPNPSSKRNEQRIELFQILRPDEHIAKQRYIGGKNLPTRGTAEWLSFDVTDTVREWLLRRESNLGLEISIHCPCHTFQPNGDILENIHEVMEIKFKGVDNEDDHGRGDLGRLKKQKDHHNPHLILMMIPPHRLDNPGQGGQRKKRALDTNYCFRNLEENCCVRPLYIDFRQDLGWKWVHEPKGYYANFCSGPCPYLRSADTTHSTVLGLYNTLNPEASASPCCVPQDLEPLTILYYVGRTPKVEQLSNMVVKSCKCS</sequence>
<protein>
    <recommendedName>
        <fullName>Transforming growth factor beta-3 proprotein</fullName>
    </recommendedName>
    <component>
        <recommendedName>
            <fullName>Latency-associated peptide</fullName>
            <shortName>LAP</shortName>
        </recommendedName>
    </component>
    <component>
        <recommendedName>
            <fullName>Transforming growth factor beta-3</fullName>
            <shortName>TGF-beta-3</shortName>
        </recommendedName>
    </component>
</protein>
<feature type="signal peptide" evidence="4">
    <location>
        <begin position="1"/>
        <end position="23"/>
    </location>
</feature>
<feature type="chain" id="PRO_0000033796" description="Latency-associated peptide" evidence="1">
    <location>
        <begin position="24"/>
        <end position="300"/>
    </location>
</feature>
<feature type="chain" id="PRO_0000033797" description="Transforming growth factor beta-3" evidence="1">
    <location>
        <begin position="301"/>
        <end position="412"/>
    </location>
</feature>
<feature type="short sequence motif" description="Cell attachment site" evidence="1">
    <location>
        <begin position="261"/>
        <end position="263"/>
    </location>
</feature>
<feature type="modified residue" description="N5-methylglutamine" evidence="7">
    <location>
        <position position="293"/>
    </location>
</feature>
<feature type="glycosylation site" description="N-linked (GlcNAc...) asparagine" evidence="4">
    <location>
        <position position="74"/>
    </location>
</feature>
<feature type="glycosylation site" description="N-linked (GlcNAc...) asparagine" evidence="4">
    <location>
        <position position="135"/>
    </location>
</feature>
<feature type="glycosylation site" description="N-linked (GlcNAc...) asparagine" evidence="4">
    <location>
        <position position="142"/>
    </location>
</feature>
<feature type="disulfide bond" evidence="8">
    <location>
        <begin position="307"/>
        <end position="316"/>
    </location>
</feature>
<feature type="disulfide bond" evidence="8">
    <location>
        <begin position="315"/>
        <end position="378"/>
    </location>
</feature>
<feature type="disulfide bond" evidence="8">
    <location>
        <begin position="344"/>
        <end position="409"/>
    </location>
</feature>
<feature type="disulfide bond" evidence="8">
    <location>
        <begin position="348"/>
        <end position="411"/>
    </location>
</feature>
<feature type="disulfide bond" description="Interchain" evidence="8">
    <location>
        <position position="377"/>
    </location>
</feature>
<feature type="splice variant" id="VSP_056285" description="In isoform 2." evidence="10 11">
    <location>
        <begin position="310"/>
        <end position="412"/>
    </location>
</feature>
<feature type="sequence variant" id="VAR_016315" description="In dbSNP:rs4252315." evidence="9">
    <original>T</original>
    <variation>M</variation>
    <location>
        <position position="60"/>
    </location>
</feature>
<feature type="sequence variant" id="VAR_070924" description="In LDS5; hypomorphic mutation; results in impaired TGF-beta signaling; dbSNP:rs398122984." evidence="6">
    <original>C</original>
    <variation>Y</variation>
    <location>
        <position position="409"/>
    </location>
</feature>
<feature type="mutagenesis site" description="Abolishes methylation by N6AMT1." evidence="7">
    <original>Q</original>
    <variation>R</variation>
    <location>
        <position position="293"/>
    </location>
</feature>
<feature type="helix" evidence="16">
    <location>
        <begin position="32"/>
        <end position="51"/>
    </location>
</feature>
<feature type="helix" evidence="16">
    <location>
        <begin position="67"/>
        <end position="78"/>
    </location>
</feature>
<feature type="turn" evidence="16">
    <location>
        <begin position="98"/>
        <end position="100"/>
    </location>
</feature>
<feature type="strand" evidence="16">
    <location>
        <begin position="105"/>
        <end position="107"/>
    </location>
</feature>
<feature type="strand" evidence="16">
    <location>
        <begin position="169"/>
        <end position="172"/>
    </location>
</feature>
<feature type="helix" evidence="16">
    <location>
        <begin position="205"/>
        <end position="212"/>
    </location>
</feature>
<feature type="strand" evidence="16">
    <location>
        <begin position="221"/>
        <end position="224"/>
    </location>
</feature>
<feature type="helix" evidence="14">
    <location>
        <begin position="265"/>
        <end position="268"/>
    </location>
</feature>
<feature type="strand" evidence="16">
    <location>
        <begin position="279"/>
        <end position="281"/>
    </location>
</feature>
<feature type="helix" evidence="13">
    <location>
        <begin position="304"/>
        <end position="309"/>
    </location>
</feature>
<feature type="strand" evidence="13">
    <location>
        <begin position="314"/>
        <end position="318"/>
    </location>
</feature>
<feature type="strand" evidence="13">
    <location>
        <begin position="321"/>
        <end position="323"/>
    </location>
</feature>
<feature type="helix" evidence="13">
    <location>
        <begin position="324"/>
        <end position="328"/>
    </location>
</feature>
<feature type="strand" evidence="13">
    <location>
        <begin position="333"/>
        <end position="335"/>
    </location>
</feature>
<feature type="strand" evidence="13">
    <location>
        <begin position="337"/>
        <end position="340"/>
    </location>
</feature>
<feature type="strand" evidence="13">
    <location>
        <begin position="343"/>
        <end position="346"/>
    </location>
</feature>
<feature type="turn" evidence="13">
    <location>
        <begin position="350"/>
        <end position="353"/>
    </location>
</feature>
<feature type="helix" evidence="13">
    <location>
        <begin position="357"/>
        <end position="368"/>
    </location>
</feature>
<feature type="helix" evidence="15">
    <location>
        <begin position="370"/>
        <end position="372"/>
    </location>
</feature>
<feature type="strand" evidence="13">
    <location>
        <begin position="377"/>
        <end position="380"/>
    </location>
</feature>
<feature type="strand" evidence="13">
    <location>
        <begin position="382"/>
        <end position="392"/>
    </location>
</feature>
<feature type="strand" evidence="13">
    <location>
        <begin position="395"/>
        <end position="406"/>
    </location>
</feature>
<feature type="strand" evidence="13">
    <location>
        <begin position="408"/>
        <end position="412"/>
    </location>
</feature>
<reference key="1">
    <citation type="journal article" date="1988" name="Proc. Natl. Acad. Sci. U.S.A.">
        <title>Identification of another member of the transforming growth factor type beta gene family.</title>
        <authorList>
            <person name="ten Dijke P."/>
            <person name="Hansen P."/>
            <person name="Iwata K."/>
            <person name="Pieler C."/>
            <person name="Foulkes J.G."/>
        </authorList>
    </citation>
    <scope>NUCLEOTIDE SEQUENCE [MRNA] (ISOFORM 1)</scope>
</reference>
<reference key="2">
    <citation type="journal article" date="1988" name="EMBO J.">
        <title>A new type of transforming growth factor-beta, TGF-beta 3.</title>
        <authorList>
            <person name="Derynck R."/>
            <person name="Lindquist P.B."/>
            <person name="Lee A."/>
            <person name="Wen D."/>
            <person name="Tamm J."/>
            <person name="Graycar J.L."/>
            <person name="Rhee L."/>
            <person name="Mason A.J."/>
            <person name="Miller D.A."/>
            <person name="Coffey R.J."/>
            <person name="Moses H.L."/>
            <person name="Chen E.Y."/>
        </authorList>
    </citation>
    <scope>NUCLEOTIDE SEQUENCE [MRNA] (ISOFORM 1)</scope>
    <source>
        <tissue>Placenta</tissue>
    </source>
</reference>
<reference key="3">
    <citation type="submission" date="1998-11" db="EMBL/GenBank/DDBJ databases">
        <title>Complete genomic sequence of human transforming growth factor-beta 3.</title>
        <authorList>
            <person name="Madan A."/>
            <person name="Rowen L."/>
            <person name="Qin S."/>
            <person name="Dickhoff R."/>
            <person name="Shaffer T."/>
            <person name="James R."/>
            <person name="Abbasi N."/>
            <person name="Loretz C."/>
            <person name="Madan A."/>
            <person name="Dors M."/>
            <person name="Dahl T."/>
            <person name="Hall J."/>
            <person name="Lasky S."/>
            <person name="Hood L."/>
        </authorList>
    </citation>
    <scope>NUCLEOTIDE SEQUENCE [GENOMIC DNA]</scope>
</reference>
<reference key="4">
    <citation type="submission" date="2002-08" db="EMBL/GenBank/DDBJ databases">
        <authorList>
            <consortium name="NIEHS SNPs program"/>
        </authorList>
    </citation>
    <scope>NUCLEOTIDE SEQUENCE [GENOMIC DNA]</scope>
</reference>
<reference key="5">
    <citation type="submission" date="2002-12" db="EMBL/GenBank/DDBJ databases">
        <authorList>
            <consortium name="SeattleSNPs variation discovery resource"/>
        </authorList>
    </citation>
    <scope>NUCLEOTIDE SEQUENCE [GENOMIC DNA]</scope>
    <scope>VARIANT MET-60</scope>
</reference>
<reference key="6">
    <citation type="submission" date="2003-05" db="EMBL/GenBank/DDBJ databases">
        <title>Cloning of human full-length CDSs in BD Creator(TM) system donor vector.</title>
        <authorList>
            <person name="Kalnine N."/>
            <person name="Chen X."/>
            <person name="Rolfs A."/>
            <person name="Halleck A."/>
            <person name="Hines L."/>
            <person name="Eisenstein S."/>
            <person name="Koundinya M."/>
            <person name="Raphael J."/>
            <person name="Moreira D."/>
            <person name="Kelley T."/>
            <person name="LaBaer J."/>
            <person name="Lin Y."/>
            <person name="Phelan M."/>
            <person name="Farmer A."/>
        </authorList>
    </citation>
    <scope>NUCLEOTIDE SEQUENCE [LARGE SCALE MRNA] (ISOFORM 2)</scope>
</reference>
<reference key="7">
    <citation type="journal article" date="2003" name="Nature">
        <title>The DNA sequence and analysis of human chromosome 14.</title>
        <authorList>
            <person name="Heilig R."/>
            <person name="Eckenberg R."/>
            <person name="Petit J.-L."/>
            <person name="Fonknechten N."/>
            <person name="Da Silva C."/>
            <person name="Cattolico L."/>
            <person name="Levy M."/>
            <person name="Barbe V."/>
            <person name="De Berardinis V."/>
            <person name="Ureta-Vidal A."/>
            <person name="Pelletier E."/>
            <person name="Vico V."/>
            <person name="Anthouard V."/>
            <person name="Rowen L."/>
            <person name="Madan A."/>
            <person name="Qin S."/>
            <person name="Sun H."/>
            <person name="Du H."/>
            <person name="Pepin K."/>
            <person name="Artiguenave F."/>
            <person name="Robert C."/>
            <person name="Cruaud C."/>
            <person name="Bruels T."/>
            <person name="Jaillon O."/>
            <person name="Friedlander L."/>
            <person name="Samson G."/>
            <person name="Brottier P."/>
            <person name="Cure S."/>
            <person name="Segurens B."/>
            <person name="Aniere F."/>
            <person name="Samain S."/>
            <person name="Crespeau H."/>
            <person name="Abbasi N."/>
            <person name="Aiach N."/>
            <person name="Boscus D."/>
            <person name="Dickhoff R."/>
            <person name="Dors M."/>
            <person name="Dubois I."/>
            <person name="Friedman C."/>
            <person name="Gouyvenoux M."/>
            <person name="James R."/>
            <person name="Madan A."/>
            <person name="Mairey-Estrada B."/>
            <person name="Mangenot S."/>
            <person name="Martins N."/>
            <person name="Menard M."/>
            <person name="Oztas S."/>
            <person name="Ratcliffe A."/>
            <person name="Shaffer T."/>
            <person name="Trask B."/>
            <person name="Vacherie B."/>
            <person name="Bellemere C."/>
            <person name="Belser C."/>
            <person name="Besnard-Gonnet M."/>
            <person name="Bartol-Mavel D."/>
            <person name="Boutard M."/>
            <person name="Briez-Silla S."/>
            <person name="Combette S."/>
            <person name="Dufosse-Laurent V."/>
            <person name="Ferron C."/>
            <person name="Lechaplais C."/>
            <person name="Louesse C."/>
            <person name="Muselet D."/>
            <person name="Magdelenat G."/>
            <person name="Pateau E."/>
            <person name="Petit E."/>
            <person name="Sirvain-Trukniewicz P."/>
            <person name="Trybou A."/>
            <person name="Vega-Czarny N."/>
            <person name="Bataille E."/>
            <person name="Bluet E."/>
            <person name="Bordelais I."/>
            <person name="Dubois M."/>
            <person name="Dumont C."/>
            <person name="Guerin T."/>
            <person name="Haffray S."/>
            <person name="Hammadi R."/>
            <person name="Muanga J."/>
            <person name="Pellouin V."/>
            <person name="Robert D."/>
            <person name="Wunderle E."/>
            <person name="Gauguet G."/>
            <person name="Roy A."/>
            <person name="Sainte-Marthe L."/>
            <person name="Verdier J."/>
            <person name="Verdier-Discala C."/>
            <person name="Hillier L.W."/>
            <person name="Fulton L."/>
            <person name="McPherson J."/>
            <person name="Matsuda F."/>
            <person name="Wilson R."/>
            <person name="Scarpelli C."/>
            <person name="Gyapay G."/>
            <person name="Wincker P."/>
            <person name="Saurin W."/>
            <person name="Quetier F."/>
            <person name="Waterston R."/>
            <person name="Hood L."/>
            <person name="Weissenbach J."/>
        </authorList>
    </citation>
    <scope>NUCLEOTIDE SEQUENCE [LARGE SCALE GENOMIC DNA]</scope>
</reference>
<reference key="8">
    <citation type="journal article" date="2004" name="Genome Res.">
        <title>The status, quality, and expansion of the NIH full-length cDNA project: the Mammalian Gene Collection (MGC).</title>
        <authorList>
            <consortium name="The MGC Project Team"/>
        </authorList>
    </citation>
    <scope>NUCLEOTIDE SEQUENCE [LARGE SCALE MRNA] (ISOFORM 2)</scope>
    <source>
        <tissue>Prostate</tissue>
    </source>
</reference>
<reference key="9">
    <citation type="journal article" date="1991" name="Mol. Cell. Biol.">
        <title>Inhibition of translation of transforming growth factor-beta 3 mRNA by its 5' untranslated region.</title>
        <authorList>
            <person name="Arrick B.A."/>
            <person name="Lee A.L."/>
            <person name="Grendell R.L."/>
            <person name="Derynck R."/>
        </authorList>
    </citation>
    <scope>NUCLEOTIDE SEQUENCE [MRNA] OF 1-48 (ISOFORM 1/2)</scope>
</reference>
<reference key="10">
    <citation type="journal article" date="2007" name="J. Biol. Chem.">
        <title>Mechanisms for asporin function and regulation in articular cartilage.</title>
        <authorList>
            <person name="Nakajima M."/>
            <person name="Kizawa H."/>
            <person name="Saitoh M."/>
            <person name="Kou I."/>
            <person name="Miyazono K."/>
            <person name="Ikegawa S."/>
        </authorList>
    </citation>
    <scope>INTERACTION WITH ASPN</scope>
</reference>
<reference key="11">
    <citation type="journal article" date="1996" name="Protein Sci.">
        <title>The crystal structure of TGF-beta 3 and comparison to TGF-beta 2: implications for receptor binding.</title>
        <authorList>
            <person name="Mittl P.R.E."/>
            <person name="Priestle J.P."/>
            <person name="Cox D.A."/>
            <person name="McMaster G."/>
            <person name="Cerletti N."/>
            <person name="Gruetter M.G."/>
        </authorList>
    </citation>
    <scope>X-RAY CRYSTALLOGRAPHY (2.0 ANGSTROMS) OF 301-412</scope>
    <scope>DISULFIDE BONDS</scope>
</reference>
<reference key="12">
    <citation type="journal article" date="2005" name="Cardiovasc. Res.">
        <title>Regulatory mutations in transforming growth factor-beta3 gene cause arrhythmogenic right ventricular cardiomyopathy type 1.</title>
        <authorList>
            <person name="Beffagna G."/>
            <person name="Occhi G."/>
            <person name="Nava A."/>
            <person name="Vitiello L."/>
            <person name="Ditadi A."/>
            <person name="Basso C."/>
            <person name="Bauce B."/>
            <person name="Carraro G."/>
            <person name="Thiene G."/>
            <person name="Towbin J.A."/>
            <person name="Danieli G.A."/>
            <person name="Rampazzo A."/>
        </authorList>
    </citation>
    <scope>INVOLVEMENT IN ARVD1</scope>
</reference>
<reference key="13">
    <citation type="journal article" date="2016" name="J. Biol. Chem.">
        <title>Substrate specificity of the HEMK2 protein glutamine methyltransferase and identification of novel substrates.</title>
        <authorList>
            <person name="Kusevic D."/>
            <person name="Kudithipudi S."/>
            <person name="Jeltsch A."/>
        </authorList>
    </citation>
    <scope>METHYLATION AT GLN-293</scope>
    <scope>MUTAGENESIS OF GLN-293</scope>
</reference>
<reference key="14">
    <citation type="journal article" date="2013" name="Am. J. Med. Genet. A">
        <title>A mutation in TGFB3 associated with a syndrome of low muscle mass, growth retardation, distal arthrogryposis and clinical features overlapping with Marfan and Loeys-Dietz syndrome.</title>
        <authorList>
            <person name="Rienhoff H.Y. Jr."/>
            <person name="Yeo C.Y."/>
            <person name="Morissette R."/>
            <person name="Khrebtukova I."/>
            <person name="Melnick J."/>
            <person name="Luo S."/>
            <person name="Leng N."/>
            <person name="Kim Y.J."/>
            <person name="Schroth G."/>
            <person name="Westwick J."/>
            <person name="Vogel H."/>
            <person name="McDonnell N."/>
            <person name="Hall J.G."/>
            <person name="Whitman M."/>
        </authorList>
    </citation>
    <scope>VARIANT LDS5 TYR-409</scope>
    <scope>CHARACTERIZATION OF VARIANT LDS5 TYR-409</scope>
</reference>
<proteinExistence type="evidence at protein level"/>
<dbReference type="EMBL" id="J03241">
    <property type="protein sequence ID" value="AAA61161.1"/>
    <property type="molecule type" value="mRNA"/>
</dbReference>
<dbReference type="EMBL" id="X14149">
    <property type="protein sequence ID" value="CAA32362.1"/>
    <property type="molecule type" value="mRNA"/>
</dbReference>
<dbReference type="EMBL" id="X14885">
    <property type="protein sequence ID" value="CAA33024.1"/>
    <property type="status" value="ALT_INIT"/>
    <property type="molecule type" value="Genomic_DNA"/>
</dbReference>
<dbReference type="EMBL" id="X14886">
    <property type="protein sequence ID" value="CAA33024.1"/>
    <property type="status" value="JOINED"/>
    <property type="molecule type" value="Genomic_DNA"/>
</dbReference>
<dbReference type="EMBL" id="X14887">
    <property type="protein sequence ID" value="CAA33024.1"/>
    <property type="status" value="JOINED"/>
    <property type="molecule type" value="Genomic_DNA"/>
</dbReference>
<dbReference type="EMBL" id="X14888">
    <property type="protein sequence ID" value="CAA33024.1"/>
    <property type="status" value="JOINED"/>
    <property type="molecule type" value="Genomic_DNA"/>
</dbReference>
<dbReference type="EMBL" id="X14889">
    <property type="protein sequence ID" value="CAA33024.1"/>
    <property type="status" value="JOINED"/>
    <property type="molecule type" value="Genomic_DNA"/>
</dbReference>
<dbReference type="EMBL" id="X14890">
    <property type="protein sequence ID" value="CAA33024.1"/>
    <property type="status" value="JOINED"/>
    <property type="molecule type" value="Genomic_DNA"/>
</dbReference>
<dbReference type="EMBL" id="X14891">
    <property type="protein sequence ID" value="CAA33024.1"/>
    <property type="status" value="JOINED"/>
    <property type="molecule type" value="Genomic_DNA"/>
</dbReference>
<dbReference type="EMBL" id="AY140241">
    <property type="protein sequence ID" value="AAM96819.1"/>
    <property type="molecule type" value="Genomic_DNA"/>
</dbReference>
<dbReference type="EMBL" id="AY208161">
    <property type="protein sequence ID" value="AAO13495.1"/>
    <property type="molecule type" value="Genomic_DNA"/>
</dbReference>
<dbReference type="EMBL" id="BT007287">
    <property type="protein sequence ID" value="AAP35951.1"/>
    <property type="molecule type" value="mRNA"/>
</dbReference>
<dbReference type="EMBL" id="AF107885">
    <property type="protein sequence ID" value="AAC79727.1"/>
    <property type="molecule type" value="Genomic_DNA"/>
</dbReference>
<dbReference type="EMBL" id="BC018503">
    <property type="protein sequence ID" value="AAH18503.1"/>
    <property type="molecule type" value="mRNA"/>
</dbReference>
<dbReference type="CCDS" id="CCDS86415.1">
    <molecule id="P10600-2"/>
</dbReference>
<dbReference type="CCDS" id="CCDS9846.1">
    <molecule id="P10600-1"/>
</dbReference>
<dbReference type="PIR" id="A36169">
    <property type="entry name" value="A36169"/>
</dbReference>
<dbReference type="RefSeq" id="NP_001316867.1">
    <molecule id="P10600-2"/>
    <property type="nucleotide sequence ID" value="NM_001329938.2"/>
</dbReference>
<dbReference type="RefSeq" id="NP_001316868.1">
    <molecule id="P10600-1"/>
    <property type="nucleotide sequence ID" value="NM_001329939.2"/>
</dbReference>
<dbReference type="RefSeq" id="NP_003230.1">
    <molecule id="P10600-1"/>
    <property type="nucleotide sequence ID" value="NM_003239.5"/>
</dbReference>
<dbReference type="PDB" id="1KTZ">
    <property type="method" value="X-ray"/>
    <property type="resolution" value="2.15 A"/>
    <property type="chains" value="A=301-412"/>
</dbReference>
<dbReference type="PDB" id="1TGJ">
    <property type="method" value="X-ray"/>
    <property type="resolution" value="2.00 A"/>
    <property type="chains" value="A=301-412"/>
</dbReference>
<dbReference type="PDB" id="1TGK">
    <property type="method" value="X-ray"/>
    <property type="resolution" value="3.30 A"/>
    <property type="chains" value="A=301-412"/>
</dbReference>
<dbReference type="PDB" id="2PJY">
    <property type="method" value="X-ray"/>
    <property type="resolution" value="3.00 A"/>
    <property type="chains" value="A=301-412"/>
</dbReference>
<dbReference type="PDB" id="3EO1">
    <property type="method" value="X-ray"/>
    <property type="resolution" value="3.10 A"/>
    <property type="chains" value="C/F/I/L=301-412"/>
</dbReference>
<dbReference type="PDB" id="4UM9">
    <property type="method" value="X-ray"/>
    <property type="resolution" value="2.50 A"/>
    <property type="chains" value="E/F=259-269"/>
</dbReference>
<dbReference type="PDB" id="8V52">
    <property type="method" value="X-ray"/>
    <property type="resolution" value="2.50 A"/>
    <property type="chains" value="A/B=301-412"/>
</dbReference>
<dbReference type="PDB" id="8VS6">
    <property type="method" value="EM"/>
    <property type="resolution" value="2.73 A"/>
    <property type="chains" value="E=24-412"/>
</dbReference>
<dbReference type="PDB" id="8VSB">
    <property type="method" value="EM"/>
    <property type="resolution" value="2.93 A"/>
    <property type="chains" value="A/B=24-412"/>
</dbReference>
<dbReference type="PDB" id="9B9F">
    <property type="method" value="X-ray"/>
    <property type="resolution" value="3.00 A"/>
    <property type="chains" value="A/B/F/G=301-412"/>
</dbReference>
<dbReference type="PDB" id="9FK5">
    <property type="method" value="EM"/>
    <property type="resolution" value="4.10 A"/>
    <property type="chains" value="A/B=301-412"/>
</dbReference>
<dbReference type="PDBsum" id="1KTZ"/>
<dbReference type="PDBsum" id="1TGJ"/>
<dbReference type="PDBsum" id="1TGK"/>
<dbReference type="PDBsum" id="2PJY"/>
<dbReference type="PDBsum" id="3EO1"/>
<dbReference type="PDBsum" id="4UM9"/>
<dbReference type="PDBsum" id="8V52"/>
<dbReference type="PDBsum" id="8VS6"/>
<dbReference type="PDBsum" id="8VSB"/>
<dbReference type="PDBsum" id="9B9F"/>
<dbReference type="PDBsum" id="9FK5"/>
<dbReference type="BMRB" id="P10600"/>
<dbReference type="EMDB" id="EMD-43489"/>
<dbReference type="EMDB" id="EMD-43492"/>
<dbReference type="EMDB" id="EMD-50519"/>
<dbReference type="SMR" id="P10600"/>
<dbReference type="BioGRID" id="112901">
    <property type="interactions" value="11"/>
</dbReference>
<dbReference type="ComplexPortal" id="CPX-2544">
    <property type="entry name" value="TGF-beta-3-TGFR complex"/>
</dbReference>
<dbReference type="ComplexPortal" id="CPX-606">
    <property type="entry name" value="TGF-beta-3 complex"/>
</dbReference>
<dbReference type="CORUM" id="P10600"/>
<dbReference type="DIP" id="DIP-5937N"/>
<dbReference type="FunCoup" id="P10600">
    <property type="interactions" value="1080"/>
</dbReference>
<dbReference type="IntAct" id="P10600">
    <property type="interactions" value="10"/>
</dbReference>
<dbReference type="MINT" id="P10600"/>
<dbReference type="STRING" id="9606.ENSP00000238682"/>
<dbReference type="ChEMBL" id="CHEMBL3712903"/>
<dbReference type="DrugBank" id="DB03316">
    <property type="generic name" value="1,4-Dioxane"/>
</dbReference>
<dbReference type="GlyConnect" id="1837">
    <property type="glycosylation" value="3 N-Linked glycans (1 site)"/>
</dbReference>
<dbReference type="GlyCosmos" id="P10600">
    <property type="glycosylation" value="3 sites, 3 glycans"/>
</dbReference>
<dbReference type="GlyGen" id="P10600">
    <property type="glycosylation" value="6 sites, 8 N-linked glycans (2 sites), 2 O-linked glycans (2 sites)"/>
</dbReference>
<dbReference type="iPTMnet" id="P10600"/>
<dbReference type="PhosphoSitePlus" id="P10600"/>
<dbReference type="BioMuta" id="TGFB3"/>
<dbReference type="DMDM" id="135684"/>
<dbReference type="jPOST" id="P10600"/>
<dbReference type="MassIVE" id="P10600"/>
<dbReference type="PaxDb" id="9606-ENSP00000238682"/>
<dbReference type="PeptideAtlas" id="P10600"/>
<dbReference type="ProteomicsDB" id="52617">
    <molecule id="P10600-1"/>
</dbReference>
<dbReference type="ProteomicsDB" id="74762"/>
<dbReference type="ABCD" id="P10600">
    <property type="antibodies" value="54 sequenced antibodies"/>
</dbReference>
<dbReference type="Antibodypedia" id="4331">
    <property type="antibodies" value="496 antibodies from 40 providers"/>
</dbReference>
<dbReference type="DNASU" id="7043"/>
<dbReference type="Ensembl" id="ENST00000238682.8">
    <molecule id="P10600-1"/>
    <property type="protein sequence ID" value="ENSP00000238682.3"/>
    <property type="gene ID" value="ENSG00000119699.8"/>
</dbReference>
<dbReference type="Ensembl" id="ENST00000556285.1">
    <molecule id="P10600-2"/>
    <property type="protein sequence ID" value="ENSP00000451110.1"/>
    <property type="gene ID" value="ENSG00000119699.8"/>
</dbReference>
<dbReference type="Ensembl" id="ENST00000556674.2">
    <molecule id="P10600-1"/>
    <property type="protein sequence ID" value="ENSP00000502685.1"/>
    <property type="gene ID" value="ENSG00000119699.8"/>
</dbReference>
<dbReference type="GeneID" id="7043"/>
<dbReference type="KEGG" id="hsa:7043"/>
<dbReference type="MANE-Select" id="ENST00000238682.8">
    <property type="protein sequence ID" value="ENSP00000238682.3"/>
    <property type="RefSeq nucleotide sequence ID" value="NM_003239.5"/>
    <property type="RefSeq protein sequence ID" value="NP_003230.1"/>
</dbReference>
<dbReference type="UCSC" id="uc001xsc.3">
    <molecule id="P10600-1"/>
    <property type="organism name" value="human"/>
</dbReference>
<dbReference type="AGR" id="HGNC:11769"/>
<dbReference type="CTD" id="7043"/>
<dbReference type="DisGeNET" id="7043"/>
<dbReference type="GeneCards" id="TGFB3"/>
<dbReference type="GeneReviews" id="TGFB3"/>
<dbReference type="HGNC" id="HGNC:11769">
    <property type="gene designation" value="TGFB3"/>
</dbReference>
<dbReference type="HPA" id="ENSG00000119699">
    <property type="expression patterns" value="Low tissue specificity"/>
</dbReference>
<dbReference type="MalaCards" id="TGFB3"/>
<dbReference type="MIM" id="107970">
    <property type="type" value="phenotype"/>
</dbReference>
<dbReference type="MIM" id="190230">
    <property type="type" value="gene"/>
</dbReference>
<dbReference type="MIM" id="615582">
    <property type="type" value="phenotype"/>
</dbReference>
<dbReference type="neXtProt" id="NX_P10600"/>
<dbReference type="OpenTargets" id="ENSG00000119699"/>
<dbReference type="Orphanet" id="91387">
    <property type="disease" value="Familial thoracic aortic aneurysm and aortic dissection"/>
</dbReference>
<dbReference type="Orphanet" id="293888">
    <property type="disease" value="Inherited isolated arrhythmogenic cardiomyopathy, dominant-left variant"/>
</dbReference>
<dbReference type="Orphanet" id="293910">
    <property type="disease" value="Inherited isolated arrhythmogenic cardiomyopathy, dominant-right variant"/>
</dbReference>
<dbReference type="Orphanet" id="293899">
    <property type="disease" value="Inherited isolated arrhythmogenic ventricular dysplasia, biventricular variant"/>
</dbReference>
<dbReference type="Orphanet" id="60030">
    <property type="disease" value="Loeys-Dietz syndrome"/>
</dbReference>
<dbReference type="PharmGKB" id="PA36483"/>
<dbReference type="VEuPathDB" id="HostDB:ENSG00000119699"/>
<dbReference type="eggNOG" id="KOG3900">
    <property type="taxonomic scope" value="Eukaryota"/>
</dbReference>
<dbReference type="GeneTree" id="ENSGT00940000155747"/>
<dbReference type="HOGENOM" id="CLU_039840_0_0_1"/>
<dbReference type="InParanoid" id="P10600"/>
<dbReference type="OMA" id="SHMKMYV"/>
<dbReference type="OrthoDB" id="6092228at2759"/>
<dbReference type="PAN-GO" id="P10600">
    <property type="GO annotations" value="9 GO annotations based on evolutionary models"/>
</dbReference>
<dbReference type="PhylomeDB" id="P10600"/>
<dbReference type="TreeFam" id="TF351793"/>
<dbReference type="PathwayCommons" id="P10600"/>
<dbReference type="Reactome" id="R-HSA-114608">
    <property type="pathway name" value="Platelet degranulation"/>
</dbReference>
<dbReference type="Reactome" id="R-HSA-2129379">
    <property type="pathway name" value="Molecules associated with elastic fibres"/>
</dbReference>
<dbReference type="Reactome" id="R-HSA-2173789">
    <property type="pathway name" value="TGF-beta receptor signaling activates SMADs"/>
</dbReference>
<dbReference type="Reactome" id="R-HSA-3000178">
    <property type="pathway name" value="ECM proteoglycans"/>
</dbReference>
<dbReference type="SignaLink" id="P10600"/>
<dbReference type="SIGNOR" id="P10600"/>
<dbReference type="BioGRID-ORCS" id="7043">
    <property type="hits" value="9 hits in 1157 CRISPR screens"/>
</dbReference>
<dbReference type="ChiTaRS" id="TGFB3">
    <property type="organism name" value="human"/>
</dbReference>
<dbReference type="EvolutionaryTrace" id="P10600"/>
<dbReference type="GeneWiki" id="Transforming_growth_factor,_beta_3"/>
<dbReference type="GenomeRNAi" id="7043"/>
<dbReference type="Pharos" id="P10600">
    <property type="development level" value="Tbio"/>
</dbReference>
<dbReference type="PRO" id="PR:P10600"/>
<dbReference type="Proteomes" id="UP000005640">
    <property type="component" value="Chromosome 14"/>
</dbReference>
<dbReference type="RNAct" id="P10600">
    <property type="molecule type" value="protein"/>
</dbReference>
<dbReference type="Bgee" id="ENSG00000119699">
    <property type="expression patterns" value="Expressed in saphenous vein and 169 other cell types or tissues"/>
</dbReference>
<dbReference type="ExpressionAtlas" id="P10600">
    <property type="expression patterns" value="baseline and differential"/>
</dbReference>
<dbReference type="GO" id="GO:0062023">
    <property type="term" value="C:collagen-containing extracellular matrix"/>
    <property type="evidence" value="ECO:0000314"/>
    <property type="project" value="BHF-UCL"/>
</dbReference>
<dbReference type="GO" id="GO:0005576">
    <property type="term" value="C:extracellular region"/>
    <property type="evidence" value="ECO:0000304"/>
    <property type="project" value="Reactome"/>
</dbReference>
<dbReference type="GO" id="GO:0005615">
    <property type="term" value="C:extracellular space"/>
    <property type="evidence" value="ECO:0000318"/>
    <property type="project" value="GO_Central"/>
</dbReference>
<dbReference type="GO" id="GO:0043231">
    <property type="term" value="C:intracellular membrane-bounded organelle"/>
    <property type="evidence" value="ECO:0000314"/>
    <property type="project" value="HPA"/>
</dbReference>
<dbReference type="GO" id="GO:0005886">
    <property type="term" value="C:plasma membrane"/>
    <property type="evidence" value="ECO:0000305"/>
    <property type="project" value="BHF-UCL"/>
</dbReference>
<dbReference type="GO" id="GO:0031093">
    <property type="term" value="C:platelet alpha granule lumen"/>
    <property type="evidence" value="ECO:0000304"/>
    <property type="project" value="Reactome"/>
</dbReference>
<dbReference type="GO" id="GO:0005125">
    <property type="term" value="F:cytokine activity"/>
    <property type="evidence" value="ECO:0000318"/>
    <property type="project" value="GO_Central"/>
</dbReference>
<dbReference type="GO" id="GO:0008083">
    <property type="term" value="F:growth factor activity"/>
    <property type="evidence" value="ECO:0007669"/>
    <property type="project" value="UniProtKB-KW"/>
</dbReference>
<dbReference type="GO" id="GO:0042802">
    <property type="term" value="F:identical protein binding"/>
    <property type="evidence" value="ECO:0000314"/>
    <property type="project" value="BHF-UCL"/>
</dbReference>
<dbReference type="GO" id="GO:0050431">
    <property type="term" value="F:transforming growth factor beta binding"/>
    <property type="evidence" value="ECO:0000314"/>
    <property type="project" value="BHF-UCL"/>
</dbReference>
<dbReference type="GO" id="GO:0034713">
    <property type="term" value="F:type I transforming growth factor beta receptor binding"/>
    <property type="evidence" value="ECO:0000314"/>
    <property type="project" value="BHF-UCL"/>
</dbReference>
<dbReference type="GO" id="GO:0005114">
    <property type="term" value="F:type II transforming growth factor beta receptor binding"/>
    <property type="evidence" value="ECO:0000314"/>
    <property type="project" value="BHF-UCL"/>
</dbReference>
<dbReference type="GO" id="GO:0034714">
    <property type="term" value="F:type III transforming growth factor beta receptor binding"/>
    <property type="evidence" value="ECO:0000315"/>
    <property type="project" value="AgBase"/>
</dbReference>
<dbReference type="GO" id="GO:0045216">
    <property type="term" value="P:cell-cell junction organization"/>
    <property type="evidence" value="ECO:0000314"/>
    <property type="project" value="BHF-UCL"/>
</dbReference>
<dbReference type="GO" id="GO:0070483">
    <property type="term" value="P:detection of hypoxia"/>
    <property type="evidence" value="ECO:0000314"/>
    <property type="project" value="BHF-UCL"/>
</dbReference>
<dbReference type="GO" id="GO:0060325">
    <property type="term" value="P:face morphogenesis"/>
    <property type="evidence" value="ECO:0000315"/>
    <property type="project" value="BHF-UCL"/>
</dbReference>
<dbReference type="GO" id="GO:0001701">
    <property type="term" value="P:in utero embryonic development"/>
    <property type="evidence" value="ECO:0000250"/>
    <property type="project" value="BHF-UCL"/>
</dbReference>
<dbReference type="GO" id="GO:0048286">
    <property type="term" value="P:lung alveolus development"/>
    <property type="evidence" value="ECO:0000250"/>
    <property type="project" value="BHF-UCL"/>
</dbReference>
<dbReference type="GO" id="GO:0030879">
    <property type="term" value="P:mammary gland development"/>
    <property type="evidence" value="ECO:0000250"/>
    <property type="project" value="BHF-UCL"/>
</dbReference>
<dbReference type="GO" id="GO:0008285">
    <property type="term" value="P:negative regulation of cell population proliferation"/>
    <property type="evidence" value="ECO:0000315"/>
    <property type="project" value="BHF-UCL"/>
</dbReference>
<dbReference type="GO" id="GO:0010936">
    <property type="term" value="P:negative regulation of macrophage cytokine production"/>
    <property type="evidence" value="ECO:0000314"/>
    <property type="project" value="DFLAT"/>
</dbReference>
<dbReference type="GO" id="GO:0043524">
    <property type="term" value="P:negative regulation of neuron apoptotic process"/>
    <property type="evidence" value="ECO:0000250"/>
    <property type="project" value="BHF-UCL"/>
</dbReference>
<dbReference type="GO" id="GO:1904706">
    <property type="term" value="P:negative regulation of vascular associated smooth muscle cell proliferation"/>
    <property type="evidence" value="ECO:0000314"/>
    <property type="project" value="BHF-UCL"/>
</dbReference>
<dbReference type="GO" id="GO:0042476">
    <property type="term" value="P:odontogenesis"/>
    <property type="evidence" value="ECO:0000303"/>
    <property type="project" value="BHF-UCL"/>
</dbReference>
<dbReference type="GO" id="GO:0043065">
    <property type="term" value="P:positive regulation of apoptotic process"/>
    <property type="evidence" value="ECO:0000250"/>
    <property type="project" value="BHF-UCL"/>
</dbReference>
<dbReference type="GO" id="GO:0051781">
    <property type="term" value="P:positive regulation of cell division"/>
    <property type="evidence" value="ECO:0007669"/>
    <property type="project" value="UniProtKB-KW"/>
</dbReference>
<dbReference type="GO" id="GO:0008284">
    <property type="term" value="P:positive regulation of cell population proliferation"/>
    <property type="evidence" value="ECO:0000315"/>
    <property type="project" value="BHF-UCL"/>
</dbReference>
<dbReference type="GO" id="GO:0032967">
    <property type="term" value="P:positive regulation of collagen biosynthetic process"/>
    <property type="evidence" value="ECO:0000315"/>
    <property type="project" value="BHF-UCL"/>
</dbReference>
<dbReference type="GO" id="GO:0045893">
    <property type="term" value="P:positive regulation of DNA-templated transcription"/>
    <property type="evidence" value="ECO:0000314"/>
    <property type="project" value="BHF-UCL"/>
</dbReference>
<dbReference type="GO" id="GO:0010718">
    <property type="term" value="P:positive regulation of epithelial to mesenchymal transition"/>
    <property type="evidence" value="ECO:0000314"/>
    <property type="project" value="BHF-UCL"/>
</dbReference>
<dbReference type="GO" id="GO:0051491">
    <property type="term" value="P:positive regulation of filopodium assembly"/>
    <property type="evidence" value="ECO:0000250"/>
    <property type="project" value="BHF-UCL"/>
</dbReference>
<dbReference type="GO" id="GO:0050714">
    <property type="term" value="P:positive regulation of protein secretion"/>
    <property type="evidence" value="ECO:0000314"/>
    <property type="project" value="BHF-UCL"/>
</dbReference>
<dbReference type="GO" id="GO:0060391">
    <property type="term" value="P:positive regulation of SMAD protein signal transduction"/>
    <property type="evidence" value="ECO:0000250"/>
    <property type="project" value="BHF-UCL"/>
</dbReference>
<dbReference type="GO" id="GO:0051496">
    <property type="term" value="P:positive regulation of stress fiber assembly"/>
    <property type="evidence" value="ECO:0000314"/>
    <property type="project" value="BHF-UCL"/>
</dbReference>
<dbReference type="GO" id="GO:1905075">
    <property type="term" value="P:positive regulation of tight junction disassembly"/>
    <property type="evidence" value="ECO:0000314"/>
    <property type="project" value="BHF-UCL"/>
</dbReference>
<dbReference type="GO" id="GO:0045944">
    <property type="term" value="P:positive regulation of transcription by RNA polymerase II"/>
    <property type="evidence" value="ECO:0000250"/>
    <property type="project" value="BHF-UCL"/>
</dbReference>
<dbReference type="GO" id="GO:0042127">
    <property type="term" value="P:regulation of cell population proliferation"/>
    <property type="evidence" value="ECO:0000318"/>
    <property type="project" value="GO_Central"/>
</dbReference>
<dbReference type="GO" id="GO:0001666">
    <property type="term" value="P:response to hypoxia"/>
    <property type="evidence" value="ECO:0000314"/>
    <property type="project" value="BHF-UCL"/>
</dbReference>
<dbReference type="GO" id="GO:0032570">
    <property type="term" value="P:response to progesterone"/>
    <property type="evidence" value="ECO:0000314"/>
    <property type="project" value="BHF-UCL"/>
</dbReference>
<dbReference type="GO" id="GO:0007435">
    <property type="term" value="P:salivary gland morphogenesis"/>
    <property type="evidence" value="ECO:0000270"/>
    <property type="project" value="BHF-UCL"/>
</dbReference>
<dbReference type="GO" id="GO:0062009">
    <property type="term" value="P:secondary palate development"/>
    <property type="evidence" value="ECO:0000250"/>
    <property type="project" value="BHF-UCL"/>
</dbReference>
<dbReference type="GO" id="GO:0007179">
    <property type="term" value="P:transforming growth factor beta receptor signaling pathway"/>
    <property type="evidence" value="ECO:0000314"/>
    <property type="project" value="BHF-UCL"/>
</dbReference>
<dbReference type="GO" id="GO:0042704">
    <property type="term" value="P:uterine wall breakdown"/>
    <property type="evidence" value="ECO:0000304"/>
    <property type="project" value="BHF-UCL"/>
</dbReference>
<dbReference type="CDD" id="cd19386">
    <property type="entry name" value="TGF_beta_TGFB3"/>
    <property type="match status" value="1"/>
</dbReference>
<dbReference type="FunFam" id="2.10.90.10:FF:000004">
    <property type="entry name" value="Transforming growth factor beta"/>
    <property type="match status" value="1"/>
</dbReference>
<dbReference type="FunFam" id="2.60.120.970:FF:000006">
    <property type="entry name" value="Transforming growth factor beta"/>
    <property type="match status" value="1"/>
</dbReference>
<dbReference type="Gene3D" id="2.60.120.970">
    <property type="match status" value="1"/>
</dbReference>
<dbReference type="Gene3D" id="2.10.90.10">
    <property type="entry name" value="Cystine-knot cytokines"/>
    <property type="match status" value="1"/>
</dbReference>
<dbReference type="IDEAL" id="IID00355"/>
<dbReference type="InterPro" id="IPR029034">
    <property type="entry name" value="Cystine-knot_cytokine"/>
</dbReference>
<dbReference type="InterPro" id="IPR001839">
    <property type="entry name" value="TGF-b_C"/>
</dbReference>
<dbReference type="InterPro" id="IPR001111">
    <property type="entry name" value="TGF-b_propeptide"/>
</dbReference>
<dbReference type="InterPro" id="IPR016319">
    <property type="entry name" value="TGF-beta"/>
</dbReference>
<dbReference type="InterPro" id="IPR015615">
    <property type="entry name" value="TGF-beta-rel"/>
</dbReference>
<dbReference type="InterPro" id="IPR015618">
    <property type="entry name" value="TGFB3"/>
</dbReference>
<dbReference type="InterPro" id="IPR017948">
    <property type="entry name" value="TGFb_CS"/>
</dbReference>
<dbReference type="PANTHER" id="PTHR11848">
    <property type="entry name" value="TGF-BETA FAMILY"/>
    <property type="match status" value="1"/>
</dbReference>
<dbReference type="PANTHER" id="PTHR11848:SF34">
    <property type="entry name" value="TRANSFORMING GROWTH FACTOR BETA-3 PROPROTEIN"/>
    <property type="match status" value="1"/>
</dbReference>
<dbReference type="Pfam" id="PF00019">
    <property type="entry name" value="TGF_beta"/>
    <property type="match status" value="1"/>
</dbReference>
<dbReference type="Pfam" id="PF00688">
    <property type="entry name" value="TGFb_propeptide"/>
    <property type="match status" value="1"/>
</dbReference>
<dbReference type="PIRSF" id="PIRSF001787">
    <property type="entry name" value="TGF-beta"/>
    <property type="match status" value="1"/>
</dbReference>
<dbReference type="PRINTS" id="PR01423">
    <property type="entry name" value="TGFBETA"/>
</dbReference>
<dbReference type="PRINTS" id="PR01426">
    <property type="entry name" value="TGFBETA3"/>
</dbReference>
<dbReference type="SMART" id="SM00204">
    <property type="entry name" value="TGFB"/>
    <property type="match status" value="1"/>
</dbReference>
<dbReference type="SUPFAM" id="SSF57501">
    <property type="entry name" value="Cystine-knot cytokines"/>
    <property type="match status" value="1"/>
</dbReference>
<dbReference type="PROSITE" id="PS00250">
    <property type="entry name" value="TGF_BETA_1"/>
    <property type="match status" value="1"/>
</dbReference>
<dbReference type="PROSITE" id="PS51362">
    <property type="entry name" value="TGF_BETA_2"/>
    <property type="match status" value="1"/>
</dbReference>
<keyword id="KW-0002">3D-structure</keyword>
<keyword id="KW-0025">Alternative splicing</keyword>
<keyword id="KW-0122">Cardiomyopathy</keyword>
<keyword id="KW-0165">Cleavage on pair of basic residues</keyword>
<keyword id="KW-0225">Disease variant</keyword>
<keyword id="KW-1015">Disulfide bond</keyword>
<keyword id="KW-0272">Extracellular matrix</keyword>
<keyword id="KW-0325">Glycoprotein</keyword>
<keyword id="KW-0339">Growth factor</keyword>
<keyword id="KW-0488">Methylation</keyword>
<keyword id="KW-0497">Mitogen</keyword>
<keyword id="KW-1267">Proteomics identification</keyword>
<keyword id="KW-1185">Reference proteome</keyword>
<keyword id="KW-0964">Secreted</keyword>
<keyword id="KW-0732">Signal</keyword>
<name>TGFB3_HUMAN</name>
<comment type="function">
    <text evidence="1 2">Transforming growth factor beta-3 proprotein: Precursor of the Latency-associated peptide (LAP) and Transforming growth factor beta-3 (TGF-beta-3) chains, which constitute the regulatory and active subunit of TGF-beta-3, respectively.</text>
</comment>
<comment type="function">
    <molecule>Latency-associated peptide</molecule>
    <text evidence="1 2 3">Required to maintain the Transforming growth factor beta-3 (TGF-beta-3) chain in a latent state during storage in extracellular matrix (By similarity). Associates non-covalently with TGF-beta-3 and regulates its activation via interaction with 'milieu molecules', such as LTBP1 and LRRC32/GARP, that control activation of TGF-beta-3 (By similarity). Interaction with integrins results in distortion of the Latency-associated peptide chain and subsequent release of the active TGF-beta-3 (By similarity).</text>
</comment>
<comment type="function">
    <text evidence="1 2 3">Transforming growth factor beta-3: Multifunctional protein that regulates embryogenesis and cell differentiation and is required in various processes such as secondary palate development (By similarity). Activation into mature form follows different steps: following cleavage of the proprotein in the Golgi apparatus, Latency-associated peptide (LAP) and Transforming growth factor beta-3 (TGF-beta-3) chains remain non-covalently linked rendering TGF-beta-3 inactive during storage in extracellular matrix (By similarity). At the same time, LAP chain interacts with 'milieu molecules', such as LTBP1 and LRRC32/GARP that control activation of TGF-beta-3 and maintain it in a latent state during storage in extracellular milieus (By similarity). TGF-beta-3 is released from LAP by integrins: integrin-binding results in distortion of the LAP chain and subsequent release of the active TGF-beta-3 (By similarity). Once activated following release of LAP, TGF-beta-3 acts by binding to TGF-beta receptors (TGFBR1 and TGFBR2), which transduce signal (By similarity).</text>
</comment>
<comment type="subunit">
    <text evidence="1 2 3 8">Interacts with ASPN (PubMed:8819159). Latency-associated peptide: Homodimer; disulfide-linked. Latency-associated peptide: Interacts with Transforming growth factor beta-3 (TGF-beta-3) chain; interaction is non-covalent and maintains (TGF-beta-3) in a latent state (By similarity). Latency-associated peptide: Interacts with LRRC32/GARP; leading to regulate activation of TGF-beta-3 and promote epithelial fusion during palate development (By similarity). Latency-associated peptide: Interacts (via cell attachment site) with integrins, leading to release of the active TGF-beta-3 (By similarity). Transforming growth factor beta-3: Homodimer; disulfide-linked (PubMed:8819159). Transforming growth factor beta-3: Interacts with TGF-beta receptors (TGFBR1 and TGFBR2), leading to signal transduction (By similarity).</text>
</comment>
<comment type="interaction">
    <interactant intactId="EBI-1033020">
        <id>P10600</id>
    </interactant>
    <interactant intactId="EBI-1033020">
        <id>P10600</id>
        <label>TGFB3</label>
    </interactant>
    <organismsDiffer>false</organismsDiffer>
    <experiments>2</experiments>
</comment>
<comment type="interaction">
    <interactant intactId="EBI-1033020">
        <id>P10600</id>
    </interactant>
    <interactant intactId="EBI-296151">
        <id>P37173</id>
        <label>TGFBR2</label>
    </interactant>
    <organismsDiffer>false</organismsDiffer>
    <experiments>8</experiments>
</comment>
<comment type="subcellular location">
    <molecule>Latency-associated peptide</molecule>
    <subcellularLocation>
        <location evidence="1">Secreted</location>
        <location evidence="1">Extracellular space</location>
        <location evidence="1">Extracellular matrix</location>
    </subcellularLocation>
</comment>
<comment type="subcellular location">
    <molecule>Transforming growth factor beta-3</molecule>
    <subcellularLocation>
        <location evidence="1">Secreted</location>
    </subcellularLocation>
</comment>
<comment type="alternative products">
    <event type="alternative splicing"/>
    <isoform>
        <id>P10600-1</id>
        <name>1</name>
        <sequence type="displayed"/>
    </isoform>
    <isoform>
        <id>P10600-2</id>
        <name>2</name>
        <sequence type="described" ref="VSP_056285"/>
    </isoform>
</comment>
<comment type="PTM">
    <text evidence="1">Transforming growth factor beta-3 proprotein: The precursor proprotein is cleaved in the Golgi apparatus to form Transforming growth factor beta-3 (TGF-beta-3) and Latency-associated peptide (LAP) chains, which remain non-covalently linked, rendering TGF-beta-3 inactive.</text>
</comment>
<comment type="PTM">
    <text evidence="7">Methylated at Gln-293 by N6AMT1.</text>
</comment>
<comment type="disease" evidence="5">
    <disease id="DI-01549">
        <name>Arrhythmogenic right ventricular dysplasia, familial, 1</name>
        <acronym>ARVD1</acronym>
        <description>A congenital heart disease characterized by infiltration of adipose and fibrous tissue into the right ventricle and loss of myocardial cells, resulting in ventricular and supraventricular arrhythmias.</description>
        <dbReference type="MIM" id="107970"/>
    </disease>
    <text>The disease is caused by variants affecting the gene represented in this entry.</text>
</comment>
<comment type="disease" evidence="6">
    <disease id="DI-03991">
        <name>Loeys-Dietz syndrome 5</name>
        <acronym>LDS5</acronym>
        <description>A form of Loeys-Dietz syndrome, a syndrome with widespread systemic involvement characterized by arterial tortuosity and aneurysms, hypertelorism, and bifid uvula or cleft palate. LDS5 additional variable features include mitral valve disease, skeletal overgrowth, cervical spine instability, and clubfoot deformity. LDS5 patients do not manifest remarkable aortic or arterial tortuosity, and there is no strong evidence for early aortic dissection.</description>
        <dbReference type="MIM" id="615582"/>
    </disease>
    <text>The disease is caused by variants affecting the gene represented in this entry.</text>
</comment>
<comment type="similarity">
    <text evidence="12">Belongs to the TGF-beta family.</text>
</comment>
<comment type="sequence caution" evidence="12">
    <conflict type="erroneous initiation">
        <sequence resource="EMBL-CDS" id="CAA33024"/>
    </conflict>
    <text>Truncated N-terminus.</text>
</comment>
<comment type="online information" name="Wikipedia">
    <link uri="https://en.wikipedia.org/wiki/TGF_beta_3"/>
    <text>TGF beta-3 entry</text>
</comment>